<accession>P47817</accession>
<accession>Q66J76</accession>
<comment type="function">
    <text evidence="6 7 8 10">Oocyte-specific protein tyrosine kinase that phosphorylates and inhibits cdk1 and acts as a key regulator of meiosis. Required to maintain meiotic arrest in oocytes by phosphorylating cdk1 at 'Tyr-15', which inhibits cdk1 activity and prevents meiotic reentry. Negative regulator of mitosis. Involved in the mitotic DNA replication checkpoint.</text>
</comment>
<comment type="catalytic activity">
    <reaction evidence="4 8 10">
        <text>L-tyrosyl-[protein] + ATP = O-phospho-L-tyrosyl-[protein] + ADP + H(+)</text>
        <dbReference type="Rhea" id="RHEA:10596"/>
        <dbReference type="Rhea" id="RHEA-COMP:10136"/>
        <dbReference type="Rhea" id="RHEA-COMP:20101"/>
        <dbReference type="ChEBI" id="CHEBI:15378"/>
        <dbReference type="ChEBI" id="CHEBI:30616"/>
        <dbReference type="ChEBI" id="CHEBI:46858"/>
        <dbReference type="ChEBI" id="CHEBI:61978"/>
        <dbReference type="ChEBI" id="CHEBI:456216"/>
        <dbReference type="EC" id="2.7.10.2"/>
    </reaction>
</comment>
<comment type="subunit">
    <text evidence="8">Interacts with prmt5; this promotes protesomal degradation of wee2-a in the nucleus. The interaction with prmt5 is disrupted upon activation of the DNA replication checkpoint.</text>
</comment>
<comment type="subcellular location">
    <subcellularLocation>
        <location evidence="8">Nucleus</location>
    </subcellularLocation>
    <subcellularLocation>
        <location evidence="8">Cytoplasm</location>
        <location evidence="8">Cytosol</location>
    </subcellularLocation>
</comment>
<comment type="tissue specificity">
    <text evidence="6 7 8">Detected in egg (at protein level). Oocyte-specific maternally supplied protein. Present in immature and mature oocytes and in early (pregastrula) embryos, but not in post-gastrula embryos.</text>
</comment>
<comment type="developmental stage">
    <text evidence="6 7">Expressed only after meiosis I. Not detected in full-grown stage VI immature oocytes (arrested at prophase I) and in oocytes undergoing germinal vesicle breakdown (GVBD) or meiosis I, while it is present in oocytes from 1-1.5 hour after GVBD, or from the onset of meiosis II.</text>
</comment>
<comment type="PTM">
    <text>Subject to proteasomal degradation in the nucleus.</text>
</comment>
<comment type="similarity">
    <text evidence="3">Belongs to the protein kinase superfamily. Ser/Thr protein kinase family. WEE1 subfamily.</text>
</comment>
<comment type="caution">
    <text evidence="12">Was initially assigned as wee1 (PubMed:7749193). However, it corresponds to the meiosis-specific protein WEE2 in mammals.</text>
</comment>
<dbReference type="EC" id="2.7.10.2"/>
<dbReference type="EMBL" id="U13962">
    <property type="protein sequence ID" value="AAC59664.1"/>
    <property type="molecule type" value="mRNA"/>
</dbReference>
<dbReference type="EMBL" id="BC081031">
    <property type="protein sequence ID" value="AAH81031.1"/>
    <property type="molecule type" value="mRNA"/>
</dbReference>
<dbReference type="PIR" id="I51671">
    <property type="entry name" value="I51671"/>
</dbReference>
<dbReference type="RefSeq" id="NP_001081784.1">
    <property type="nucleotide sequence ID" value="NM_001088315.1"/>
</dbReference>
<dbReference type="SMR" id="P47817"/>
<dbReference type="BioGRID" id="99384">
    <property type="interactions" value="2"/>
</dbReference>
<dbReference type="iPTMnet" id="P47817"/>
<dbReference type="DNASU" id="398049"/>
<dbReference type="GeneID" id="398049"/>
<dbReference type="KEGG" id="xla:398049"/>
<dbReference type="AGR" id="Xenbase:XB-GENE-6538740"/>
<dbReference type="CTD" id="398049"/>
<dbReference type="Xenbase" id="XB-GENE-6538740">
    <property type="gene designation" value="wee2.L"/>
</dbReference>
<dbReference type="OrthoDB" id="5337378at2759"/>
<dbReference type="BRENDA" id="2.7.10.2">
    <property type="organism ID" value="6725"/>
</dbReference>
<dbReference type="Proteomes" id="UP000186698">
    <property type="component" value="Chromosome 3L"/>
</dbReference>
<dbReference type="Bgee" id="398049">
    <property type="expression patterns" value="Expressed in egg cell and 15 other cell types or tissues"/>
</dbReference>
<dbReference type="GO" id="GO:0005737">
    <property type="term" value="C:cytoplasm"/>
    <property type="evidence" value="ECO:0000318"/>
    <property type="project" value="GO_Central"/>
</dbReference>
<dbReference type="GO" id="GO:0005829">
    <property type="term" value="C:cytosol"/>
    <property type="evidence" value="ECO:0000314"/>
    <property type="project" value="UniProtKB"/>
</dbReference>
<dbReference type="GO" id="GO:0005634">
    <property type="term" value="C:nucleus"/>
    <property type="evidence" value="ECO:0000314"/>
    <property type="project" value="UniProtKB"/>
</dbReference>
<dbReference type="GO" id="GO:0005524">
    <property type="term" value="F:ATP binding"/>
    <property type="evidence" value="ECO:0007669"/>
    <property type="project" value="UniProtKB-KW"/>
</dbReference>
<dbReference type="GO" id="GO:0000287">
    <property type="term" value="F:magnesium ion binding"/>
    <property type="evidence" value="ECO:0007669"/>
    <property type="project" value="InterPro"/>
</dbReference>
<dbReference type="GO" id="GO:0004715">
    <property type="term" value="F:non-membrane spanning protein tyrosine kinase activity"/>
    <property type="evidence" value="ECO:0007669"/>
    <property type="project" value="UniProtKB-EC"/>
</dbReference>
<dbReference type="GO" id="GO:0004713">
    <property type="term" value="F:protein tyrosine kinase activity"/>
    <property type="evidence" value="ECO:0000314"/>
    <property type="project" value="UniProtKB"/>
</dbReference>
<dbReference type="GO" id="GO:0051301">
    <property type="term" value="P:cell division"/>
    <property type="evidence" value="ECO:0007669"/>
    <property type="project" value="UniProtKB-KW"/>
</dbReference>
<dbReference type="GO" id="GO:0051321">
    <property type="term" value="P:meiotic cell cycle"/>
    <property type="evidence" value="ECO:0007669"/>
    <property type="project" value="UniProtKB-KW"/>
</dbReference>
<dbReference type="GO" id="GO:0033314">
    <property type="term" value="P:mitotic DNA replication checkpoint signaling"/>
    <property type="evidence" value="ECO:0000315"/>
    <property type="project" value="UniProtKB"/>
</dbReference>
<dbReference type="GO" id="GO:0018108">
    <property type="term" value="P:peptidyl-tyrosine phosphorylation"/>
    <property type="evidence" value="ECO:0000314"/>
    <property type="project" value="UniProtKB"/>
</dbReference>
<dbReference type="GO" id="GO:0060631">
    <property type="term" value="P:regulation of meiosis I"/>
    <property type="evidence" value="ECO:0000318"/>
    <property type="project" value="GO_Central"/>
</dbReference>
<dbReference type="GO" id="GO:0007088">
    <property type="term" value="P:regulation of mitotic nuclear division"/>
    <property type="evidence" value="ECO:0000315"/>
    <property type="project" value="UniProtKB"/>
</dbReference>
<dbReference type="FunFam" id="3.30.200.20:FF:000115">
    <property type="entry name" value="Wee1-like kinase 2"/>
    <property type="match status" value="1"/>
</dbReference>
<dbReference type="FunFam" id="1.10.510.10:FF:000217">
    <property type="entry name" value="Wee1-like protein kinase"/>
    <property type="match status" value="1"/>
</dbReference>
<dbReference type="Gene3D" id="3.30.200.20">
    <property type="entry name" value="Phosphorylase Kinase, domain 1"/>
    <property type="match status" value="1"/>
</dbReference>
<dbReference type="Gene3D" id="1.10.510.10">
    <property type="entry name" value="Transferase(Phosphotransferase) domain 1"/>
    <property type="match status" value="1"/>
</dbReference>
<dbReference type="InterPro" id="IPR050339">
    <property type="entry name" value="CC_SR_Kinase"/>
</dbReference>
<dbReference type="InterPro" id="IPR011009">
    <property type="entry name" value="Kinase-like_dom_sf"/>
</dbReference>
<dbReference type="InterPro" id="IPR000719">
    <property type="entry name" value="Prot_kinase_dom"/>
</dbReference>
<dbReference type="InterPro" id="IPR017441">
    <property type="entry name" value="Protein_kinase_ATP_BS"/>
</dbReference>
<dbReference type="InterPro" id="IPR008271">
    <property type="entry name" value="Ser/Thr_kinase_AS"/>
</dbReference>
<dbReference type="InterPro" id="IPR017164">
    <property type="entry name" value="Wee1-like_protein_kinase"/>
</dbReference>
<dbReference type="PANTHER" id="PTHR11042">
    <property type="entry name" value="EUKARYOTIC TRANSLATION INITIATION FACTOR 2-ALPHA KINASE EIF2-ALPHA KINASE -RELATED"/>
    <property type="match status" value="1"/>
</dbReference>
<dbReference type="PANTHER" id="PTHR11042:SF75">
    <property type="entry name" value="WEE1-LIKE PROTEIN KINASE 2"/>
    <property type="match status" value="1"/>
</dbReference>
<dbReference type="Pfam" id="PF00069">
    <property type="entry name" value="Pkinase"/>
    <property type="match status" value="1"/>
</dbReference>
<dbReference type="PIRSF" id="PIRSF037281">
    <property type="entry name" value="Wee1-like_protein_kinase"/>
    <property type="match status" value="1"/>
</dbReference>
<dbReference type="SMART" id="SM00220">
    <property type="entry name" value="S_TKc"/>
    <property type="match status" value="1"/>
</dbReference>
<dbReference type="SUPFAM" id="SSF56112">
    <property type="entry name" value="Protein kinase-like (PK-like)"/>
    <property type="match status" value="1"/>
</dbReference>
<dbReference type="PROSITE" id="PS00107">
    <property type="entry name" value="PROTEIN_KINASE_ATP"/>
    <property type="match status" value="1"/>
</dbReference>
<dbReference type="PROSITE" id="PS50011">
    <property type="entry name" value="PROTEIN_KINASE_DOM"/>
    <property type="match status" value="1"/>
</dbReference>
<dbReference type="PROSITE" id="PS00108">
    <property type="entry name" value="PROTEIN_KINASE_ST"/>
    <property type="match status" value="1"/>
</dbReference>
<gene>
    <name type="primary">wee2-a</name>
    <name type="synonym">wee1a</name>
</gene>
<evidence type="ECO:0000250" key="1"/>
<evidence type="ECO:0000255" key="2"/>
<evidence type="ECO:0000255" key="3">
    <source>
        <dbReference type="PROSITE-ProRule" id="PRU00159"/>
    </source>
</evidence>
<evidence type="ECO:0000255" key="4">
    <source>
        <dbReference type="PROSITE-ProRule" id="PRU10027"/>
    </source>
</evidence>
<evidence type="ECO:0000256" key="5">
    <source>
        <dbReference type="SAM" id="MobiDB-lite"/>
    </source>
</evidence>
<evidence type="ECO:0000269" key="6">
    <source>
    </source>
</evidence>
<evidence type="ECO:0000269" key="7">
    <source>
    </source>
</evidence>
<evidence type="ECO:0000269" key="8">
    <source>
    </source>
</evidence>
<evidence type="ECO:0000269" key="9">
    <source>
    </source>
</evidence>
<evidence type="ECO:0000269" key="10">
    <source>
    </source>
</evidence>
<evidence type="ECO:0000305" key="11"/>
<evidence type="ECO:0000305" key="12">
    <source>
    </source>
</evidence>
<name>WEE2A_XENLA</name>
<proteinExistence type="evidence at protein level"/>
<feature type="chain" id="PRO_0000086813" description="Wee1-like protein kinase 2-A">
    <location>
        <begin position="1"/>
        <end position="555"/>
    </location>
</feature>
<feature type="domain" description="Protein kinase" evidence="3">
    <location>
        <begin position="210"/>
        <end position="480"/>
    </location>
</feature>
<feature type="region of interest" description="Disordered" evidence="5">
    <location>
        <begin position="1"/>
        <end position="81"/>
    </location>
</feature>
<feature type="region of interest" description="Disordered" evidence="5">
    <location>
        <begin position="149"/>
        <end position="175"/>
    </location>
</feature>
<feature type="coiled-coil region" evidence="2">
    <location>
        <begin position="487"/>
        <end position="513"/>
    </location>
</feature>
<feature type="compositionally biased region" description="Polar residues" evidence="5">
    <location>
        <begin position="38"/>
        <end position="48"/>
    </location>
</feature>
<feature type="compositionally biased region" description="Low complexity" evidence="5">
    <location>
        <begin position="68"/>
        <end position="78"/>
    </location>
</feature>
<feature type="compositionally biased region" description="Polar residues" evidence="5">
    <location>
        <begin position="149"/>
        <end position="160"/>
    </location>
</feature>
<feature type="active site" description="Proton acceptor" evidence="3 4">
    <location>
        <position position="337"/>
    </location>
</feature>
<feature type="binding site" evidence="3">
    <location>
        <begin position="216"/>
        <end position="224"/>
    </location>
    <ligand>
        <name>ATP</name>
        <dbReference type="ChEBI" id="CHEBI:30616"/>
    </ligand>
</feature>
<feature type="binding site" evidence="3">
    <location>
        <position position="239"/>
    </location>
    <ligand>
        <name>ATP</name>
        <dbReference type="ChEBI" id="CHEBI:30616"/>
    </ligand>
</feature>
<feature type="binding site" evidence="1">
    <location>
        <position position="342"/>
    </location>
    <ligand>
        <name>Mg(2+)</name>
        <dbReference type="ChEBI" id="CHEBI:18420"/>
    </ligand>
</feature>
<feature type="binding site" evidence="1">
    <location>
        <position position="374"/>
    </location>
    <ligand>
        <name>Mg(2+)</name>
        <dbReference type="ChEBI" id="CHEBI:18420"/>
    </ligand>
</feature>
<feature type="modified residue" description="Phosphoserine" evidence="9">
    <location>
        <position position="549"/>
    </location>
</feature>
<feature type="sequence conflict" description="In Ref. 1; AAC59664." evidence="11" ref="1">
    <original>I</original>
    <variation>V</variation>
    <location>
        <position position="228"/>
    </location>
</feature>
<feature type="sequence conflict" description="In Ref. 1; AAC59664." evidence="11" ref="1">
    <original>I</original>
    <variation>V</variation>
    <location>
        <position position="452"/>
    </location>
</feature>
<protein>
    <recommendedName>
        <fullName>Wee1-like protein kinase 2-A</fullName>
        <ecNumber>2.7.10.2</ecNumber>
    </recommendedName>
    <alternativeName>
        <fullName>Maternally supplied wee1-like protein kinase 1A</fullName>
        <shortName>Xe-wee1A</shortName>
    </alternativeName>
</protein>
<sequence length="555" mass="61716">MRTAMSCGGGLVQRLDFSSSDEEDGLSNGINEGPQKGSPVSSWRTNNCPFPITPQRNERELSPTQELSPSSDYSPDPSVGAECPGTPLHYSTWKKLKLCDTPYTPKSLLYKTLPSPGSRVHCRGQRLLRFVAGTGAELDDPSLVNINPFTPESYRQTHFQPNGKRKERPEDDCRTDRQMKYAEKEHPAVFQSKRFVLRETNMGSRYKTEFLEIEKIGAGEFGSVFKCIKRLDGCFYAIKRSKKPLAGSTDEQLALREVYAHAVLGHHPHVVRYYSAWAEDDHMIIQNEYCNGGSLQDLIVDNNKEGQFVLEQELKEILLQVSMGLKYIHGSGLVHMDIKPSNIFICRKQTELGQEESDGEDDLSSGSVLYKIGDLGHVTSILNPQVEEGDSRFLANEILQEDYSQLPKADIFALGLTIALAAGAAPLPCNEDSWHHIRKGNLPHVPQLLTPIFLALLKLLVHPDPVMRPPAASLAKNSVLRRCVGKAAQLQKQLNVEKFKTAMLERELKAAKLAQTSGKDECSDLPPMSGFSCRGRKRLVGAKNTRSLSFTCGGY</sequence>
<keyword id="KW-0067">ATP-binding</keyword>
<keyword id="KW-0131">Cell cycle</keyword>
<keyword id="KW-0132">Cell division</keyword>
<keyword id="KW-0175">Coiled coil</keyword>
<keyword id="KW-0963">Cytoplasm</keyword>
<keyword id="KW-0418">Kinase</keyword>
<keyword id="KW-0460">Magnesium</keyword>
<keyword id="KW-0469">Meiosis</keyword>
<keyword id="KW-0479">Metal-binding</keyword>
<keyword id="KW-0498">Mitosis</keyword>
<keyword id="KW-0547">Nucleotide-binding</keyword>
<keyword id="KW-0539">Nucleus</keyword>
<keyword id="KW-0597">Phosphoprotein</keyword>
<keyword id="KW-1185">Reference proteome</keyword>
<keyword id="KW-0808">Transferase</keyword>
<keyword id="KW-0829">Tyrosine-protein kinase</keyword>
<organism>
    <name type="scientific">Xenopus laevis</name>
    <name type="common">African clawed frog</name>
    <dbReference type="NCBI Taxonomy" id="8355"/>
    <lineage>
        <taxon>Eukaryota</taxon>
        <taxon>Metazoa</taxon>
        <taxon>Chordata</taxon>
        <taxon>Craniata</taxon>
        <taxon>Vertebrata</taxon>
        <taxon>Euteleostomi</taxon>
        <taxon>Amphibia</taxon>
        <taxon>Batrachia</taxon>
        <taxon>Anura</taxon>
        <taxon>Pipoidea</taxon>
        <taxon>Pipidae</taxon>
        <taxon>Xenopodinae</taxon>
        <taxon>Xenopus</taxon>
        <taxon>Xenopus</taxon>
    </lineage>
</organism>
<reference key="1">
    <citation type="journal article" date="1995" name="Mol. Biol. Cell">
        <title>Cell cycle regulation of a Xenopus Wee1-like kinase.</title>
        <authorList>
            <person name="Mueller P.R."/>
            <person name="Coleman T.R."/>
            <person name="Dunphy W.G."/>
        </authorList>
    </citation>
    <scope>NUCLEOTIDE SEQUENCE [MRNA]</scope>
    <scope>CATALYTIC ACTIVITY</scope>
    <scope>FUNCTION</scope>
    <scope>PHOSPHORYLATION</scope>
    <source>
        <tissue>Oocyte</tissue>
    </source>
</reference>
<reference key="2">
    <citation type="submission" date="2004-08" db="EMBL/GenBank/DDBJ databases">
        <authorList>
            <consortium name="NIH - Xenopus Gene Collection (XGC) project"/>
        </authorList>
    </citation>
    <scope>NUCLEOTIDE SEQUENCE [LARGE SCALE MRNA]</scope>
    <source>
        <tissue>Embryo</tissue>
    </source>
</reference>
<reference key="3">
    <citation type="journal article" date="2000" name="Genes Dev.">
        <title>Absence of Wee1 ensures the meiotic cell cycle in Xenopus oocytes.</title>
        <authorList>
            <person name="Nakajo N."/>
            <person name="Yoshitome S."/>
            <person name="Iwashita J."/>
            <person name="Iida M."/>
            <person name="Uto K."/>
            <person name="Ueno S."/>
            <person name="Okamoto K."/>
            <person name="Sagata N."/>
        </authorList>
    </citation>
    <scope>FUNCTION</scope>
    <scope>TISSUE SPECIFICITY</scope>
    <scope>DEVELOPMENTAL STAGE</scope>
</reference>
<reference key="4">
    <citation type="journal article" date="2002" name="EMBO J.">
        <title>The existence of two distinct Wee1 isoforms in Xenopus: implications for the developmental regulation of the cell cycle.</title>
        <authorList>
            <person name="Okamoto K."/>
            <person name="Nakajo N."/>
            <person name="Sagata N."/>
        </authorList>
    </citation>
    <scope>FUNCTION</scope>
    <scope>TISSUE SPECIFICITY</scope>
    <scope>DEVELOPMENTAL STAGE</scope>
</reference>
<reference key="5">
    <citation type="journal article" date="2004" name="J. Cell Biol.">
        <title>DNA replication checkpoint control of Wee1 stability by vertebrate Hsl7.</title>
        <authorList>
            <person name="Yamada A."/>
            <person name="Duffy B."/>
            <person name="Perry J.A."/>
            <person name="Kornbluth S."/>
        </authorList>
    </citation>
    <scope>FUNCTION</scope>
    <scope>CATALYTIC ACTIVITY</scope>
    <scope>INTERACTION WITH PRMT5</scope>
    <scope>SUBCELLULAR LOCATION</scope>
    <scope>PROTEASOMAL DEGRADATION</scope>
    <scope>TISSUE SPECIFICITY</scope>
</reference>
<reference key="6">
    <citation type="journal article" date="2005" name="Mol. Biol. Cell">
        <title>Changes in regulatory phosphorylation of Cdc25C Ser287 and Wee1 Ser549 during normal cell cycle progression and checkpoint arrests.</title>
        <authorList>
            <person name="Stanford J.S."/>
            <person name="Ruderman J.V."/>
        </authorList>
    </citation>
    <scope>PHOSPHORYLATION AT SER-549</scope>
</reference>